<organism>
    <name type="scientific">Polaromonas sp. (strain JS666 / ATCC BAA-500)</name>
    <dbReference type="NCBI Taxonomy" id="296591"/>
    <lineage>
        <taxon>Bacteria</taxon>
        <taxon>Pseudomonadati</taxon>
        <taxon>Pseudomonadota</taxon>
        <taxon>Betaproteobacteria</taxon>
        <taxon>Burkholderiales</taxon>
        <taxon>Comamonadaceae</taxon>
        <taxon>Polaromonas</taxon>
    </lineage>
</organism>
<protein>
    <recommendedName>
        <fullName evidence="1">HPr kinase/phosphorylase</fullName>
        <shortName evidence="1">HPrK/P</shortName>
        <ecNumber evidence="1">2.7.11.-</ecNumber>
        <ecNumber evidence="1">2.7.4.-</ecNumber>
    </recommendedName>
    <alternativeName>
        <fullName evidence="1">HPr(Ser) kinase/phosphorylase</fullName>
    </alternativeName>
</protein>
<sequence length="316" mass="35504">MKPTVVSADVLFEDHRAALKWQWVAGLGASERRFDEVAVRAARSGADLVGYLNYIHPYRVQILGEREVAYLTNESPDDCARRISRIITLEPPVLVVADDQTAPDTLLSMCERAQLPMFATPESAAFVIDVLRAYLSKHFADRTSMHGVFMDILGMGVMITGESGLGKSELGLELISRGHGLVADDAVDLYRINQTTIEGRCPELLQNLLEVRGIGLLDIKAIFGETAVRRKMRLKMIVHLVRRETLERDYERIPYEPLTQDVLGIPVRKVIIQVEAGRNIAVLVEAAVRNAILQLRGINTYQEFVERHRKAMEQDD</sequence>
<accession>Q122P8</accession>
<keyword id="KW-0067">ATP-binding</keyword>
<keyword id="KW-0418">Kinase</keyword>
<keyword id="KW-0460">Magnesium</keyword>
<keyword id="KW-0479">Metal-binding</keyword>
<keyword id="KW-0511">Multifunctional enzyme</keyword>
<keyword id="KW-0547">Nucleotide-binding</keyword>
<keyword id="KW-1185">Reference proteome</keyword>
<keyword id="KW-0723">Serine/threonine-protein kinase</keyword>
<keyword id="KW-0808">Transferase</keyword>
<feature type="chain" id="PRO_1000067166" description="HPr kinase/phosphorylase">
    <location>
        <begin position="1"/>
        <end position="316"/>
    </location>
</feature>
<feature type="region of interest" description="Important for the catalytic mechanism of both phosphorylation and dephosphorylation" evidence="1">
    <location>
        <begin position="209"/>
        <end position="218"/>
    </location>
</feature>
<feature type="region of interest" description="Important for the catalytic mechanism of dephosphorylation" evidence="1">
    <location>
        <begin position="273"/>
        <end position="278"/>
    </location>
</feature>
<feature type="active site" evidence="1">
    <location>
        <position position="146"/>
    </location>
</feature>
<feature type="active site" evidence="1">
    <location>
        <position position="167"/>
    </location>
</feature>
<feature type="active site" description="Proton acceptor; for phosphorylation activity. Proton donor; for dephosphorylation activity" evidence="1">
    <location>
        <position position="185"/>
    </location>
</feature>
<feature type="active site" evidence="1">
    <location>
        <position position="252"/>
    </location>
</feature>
<feature type="binding site" evidence="1">
    <location>
        <begin position="161"/>
        <end position="168"/>
    </location>
    <ligand>
        <name>ATP</name>
        <dbReference type="ChEBI" id="CHEBI:30616"/>
    </ligand>
</feature>
<feature type="binding site" evidence="1">
    <location>
        <position position="168"/>
    </location>
    <ligand>
        <name>Mg(2+)</name>
        <dbReference type="ChEBI" id="CHEBI:18420"/>
    </ligand>
</feature>
<feature type="binding site" evidence="1">
    <location>
        <position position="210"/>
    </location>
    <ligand>
        <name>Mg(2+)</name>
        <dbReference type="ChEBI" id="CHEBI:18420"/>
    </ligand>
</feature>
<gene>
    <name evidence="1" type="primary">hprK</name>
    <name type="ordered locus">Bpro_4611</name>
</gene>
<comment type="function">
    <text evidence="1">Catalyzes the ATP- as well as the pyrophosphate-dependent phosphorylation of a specific serine residue in HPr, a phosphocarrier protein of the phosphoenolpyruvate-dependent sugar phosphotransferase system (PTS). HprK/P also catalyzes the pyrophosphate-producing, inorganic phosphate-dependent dephosphorylation (phosphorolysis) of seryl-phosphorylated HPr (P-Ser-HPr).</text>
</comment>
<comment type="catalytic activity">
    <reaction evidence="1">
        <text>[HPr protein]-L-serine + ATP = [HPr protein]-O-phospho-L-serine + ADP + H(+)</text>
        <dbReference type="Rhea" id="RHEA:46600"/>
        <dbReference type="Rhea" id="RHEA-COMP:11602"/>
        <dbReference type="Rhea" id="RHEA-COMP:11603"/>
        <dbReference type="ChEBI" id="CHEBI:15378"/>
        <dbReference type="ChEBI" id="CHEBI:29999"/>
        <dbReference type="ChEBI" id="CHEBI:30616"/>
        <dbReference type="ChEBI" id="CHEBI:83421"/>
        <dbReference type="ChEBI" id="CHEBI:456216"/>
    </reaction>
</comment>
<comment type="catalytic activity">
    <reaction evidence="1">
        <text>[HPr protein]-O-phospho-L-serine + phosphate + H(+) = [HPr protein]-L-serine + diphosphate</text>
        <dbReference type="Rhea" id="RHEA:46604"/>
        <dbReference type="Rhea" id="RHEA-COMP:11602"/>
        <dbReference type="Rhea" id="RHEA-COMP:11603"/>
        <dbReference type="ChEBI" id="CHEBI:15378"/>
        <dbReference type="ChEBI" id="CHEBI:29999"/>
        <dbReference type="ChEBI" id="CHEBI:33019"/>
        <dbReference type="ChEBI" id="CHEBI:43474"/>
        <dbReference type="ChEBI" id="CHEBI:83421"/>
    </reaction>
</comment>
<comment type="cofactor">
    <cofactor evidence="1">
        <name>Mg(2+)</name>
        <dbReference type="ChEBI" id="CHEBI:18420"/>
    </cofactor>
</comment>
<comment type="subunit">
    <text evidence="1">Homohexamer.</text>
</comment>
<comment type="domain">
    <text evidence="1">The Walker A ATP-binding motif also binds Pi and PPi.</text>
</comment>
<comment type="miscellaneous">
    <text evidence="1">Both phosphorylation and phosphorolysis are carried out by the same active site and suggest a common mechanism for both reactions.</text>
</comment>
<comment type="similarity">
    <text evidence="1">Belongs to the HPrK/P family.</text>
</comment>
<evidence type="ECO:0000255" key="1">
    <source>
        <dbReference type="HAMAP-Rule" id="MF_01249"/>
    </source>
</evidence>
<dbReference type="EC" id="2.7.11.-" evidence="1"/>
<dbReference type="EC" id="2.7.4.-" evidence="1"/>
<dbReference type="EMBL" id="CP000316">
    <property type="protein sequence ID" value="ABE46494.1"/>
    <property type="molecule type" value="Genomic_DNA"/>
</dbReference>
<dbReference type="RefSeq" id="WP_011485481.1">
    <property type="nucleotide sequence ID" value="NC_007948.1"/>
</dbReference>
<dbReference type="SMR" id="Q122P8"/>
<dbReference type="STRING" id="296591.Bpro_4611"/>
<dbReference type="KEGG" id="pol:Bpro_4611"/>
<dbReference type="eggNOG" id="COG1493">
    <property type="taxonomic scope" value="Bacteria"/>
</dbReference>
<dbReference type="HOGENOM" id="CLU_052030_0_2_4"/>
<dbReference type="OrthoDB" id="9778803at2"/>
<dbReference type="Proteomes" id="UP000001983">
    <property type="component" value="Chromosome"/>
</dbReference>
<dbReference type="GO" id="GO:0005524">
    <property type="term" value="F:ATP binding"/>
    <property type="evidence" value="ECO:0007669"/>
    <property type="project" value="UniProtKB-UniRule"/>
</dbReference>
<dbReference type="GO" id="GO:0000287">
    <property type="term" value="F:magnesium ion binding"/>
    <property type="evidence" value="ECO:0007669"/>
    <property type="project" value="UniProtKB-UniRule"/>
</dbReference>
<dbReference type="GO" id="GO:0000155">
    <property type="term" value="F:phosphorelay sensor kinase activity"/>
    <property type="evidence" value="ECO:0007669"/>
    <property type="project" value="InterPro"/>
</dbReference>
<dbReference type="GO" id="GO:0004674">
    <property type="term" value="F:protein serine/threonine kinase activity"/>
    <property type="evidence" value="ECO:0007669"/>
    <property type="project" value="UniProtKB-KW"/>
</dbReference>
<dbReference type="GO" id="GO:0004712">
    <property type="term" value="F:protein serine/threonine/tyrosine kinase activity"/>
    <property type="evidence" value="ECO:0007669"/>
    <property type="project" value="UniProtKB-UniRule"/>
</dbReference>
<dbReference type="GO" id="GO:0006109">
    <property type="term" value="P:regulation of carbohydrate metabolic process"/>
    <property type="evidence" value="ECO:0007669"/>
    <property type="project" value="UniProtKB-UniRule"/>
</dbReference>
<dbReference type="CDD" id="cd01918">
    <property type="entry name" value="HprK_C"/>
    <property type="match status" value="1"/>
</dbReference>
<dbReference type="FunFam" id="3.40.50.300:FF:000174">
    <property type="entry name" value="HPr kinase/phosphorylase"/>
    <property type="match status" value="1"/>
</dbReference>
<dbReference type="Gene3D" id="3.40.1390.20">
    <property type="entry name" value="HprK N-terminal domain-like"/>
    <property type="match status" value="1"/>
</dbReference>
<dbReference type="Gene3D" id="3.40.50.300">
    <property type="entry name" value="P-loop containing nucleotide triphosphate hydrolases"/>
    <property type="match status" value="1"/>
</dbReference>
<dbReference type="HAMAP" id="MF_01249">
    <property type="entry name" value="HPr_kinase"/>
    <property type="match status" value="1"/>
</dbReference>
<dbReference type="InterPro" id="IPR003755">
    <property type="entry name" value="HPr(Ser)_kin/Pase"/>
</dbReference>
<dbReference type="InterPro" id="IPR011104">
    <property type="entry name" value="Hpr_kin/Pase_C"/>
</dbReference>
<dbReference type="InterPro" id="IPR011126">
    <property type="entry name" value="Hpr_kin/Pase_Hpr_N"/>
</dbReference>
<dbReference type="InterPro" id="IPR027417">
    <property type="entry name" value="P-loop_NTPase"/>
</dbReference>
<dbReference type="InterPro" id="IPR028979">
    <property type="entry name" value="Ser_kin/Pase_Hpr-like_N_sf"/>
</dbReference>
<dbReference type="NCBIfam" id="TIGR00679">
    <property type="entry name" value="hpr-ser"/>
    <property type="match status" value="1"/>
</dbReference>
<dbReference type="PANTHER" id="PTHR30305:SF1">
    <property type="entry name" value="HPR KINASE_PHOSPHORYLASE"/>
    <property type="match status" value="1"/>
</dbReference>
<dbReference type="PANTHER" id="PTHR30305">
    <property type="entry name" value="PROTEIN YJDM-RELATED"/>
    <property type="match status" value="1"/>
</dbReference>
<dbReference type="Pfam" id="PF07475">
    <property type="entry name" value="Hpr_kinase_C"/>
    <property type="match status" value="1"/>
</dbReference>
<dbReference type="Pfam" id="PF02603">
    <property type="entry name" value="Hpr_kinase_N"/>
    <property type="match status" value="1"/>
</dbReference>
<dbReference type="SUPFAM" id="SSF75138">
    <property type="entry name" value="HprK N-terminal domain-like"/>
    <property type="match status" value="1"/>
</dbReference>
<dbReference type="SUPFAM" id="SSF53795">
    <property type="entry name" value="PEP carboxykinase-like"/>
    <property type="match status" value="1"/>
</dbReference>
<name>HPRK_POLSJ</name>
<reference key="1">
    <citation type="journal article" date="2008" name="Appl. Environ. Microbiol.">
        <title>The genome of Polaromonas sp. strain JS666: insights into the evolution of a hydrocarbon- and xenobiotic-degrading bacterium, and features of relevance to biotechnology.</title>
        <authorList>
            <person name="Mattes T.E."/>
            <person name="Alexander A.K."/>
            <person name="Richardson P.M."/>
            <person name="Munk A.C."/>
            <person name="Han C.S."/>
            <person name="Stothard P."/>
            <person name="Coleman N.V."/>
        </authorList>
    </citation>
    <scope>NUCLEOTIDE SEQUENCE [LARGE SCALE GENOMIC DNA]</scope>
    <source>
        <strain>JS666 / ATCC BAA-500</strain>
    </source>
</reference>
<proteinExistence type="inferred from homology"/>